<name>CHM1A_DANRE</name>
<sequence>MDDTLFQLKFTSKQLERLAKKAEKDSKSEQAKVKKALQQKNVECARVYAENAIRKKNEGLNWLRMASRVDAVASKVQTALTMKGVAKNMTQVTKALDKALSSMDLQKVSAVMDKFETQVQNLDVHTSVMEDSMSSATTLSTPQQQVDDLILQIAEESGLEVEDQLSQLPAGASALGETSARAQEKEDQLSRRLAALRN</sequence>
<comment type="function">
    <text evidence="1">Probable peripherally associated component of the endosomal sorting required for transport complex III (ESCRT-III) which is involved in multivesicular bodies (MVBs) formation and sorting of endosomal cargo proteins into MVBs. MVBs contain intraluminal vesicles (ILVs) that are generated by invagination and scission from the limiting membrane of the endosome and mostly are delivered to lysosomes enabling degradation of membrane proteins, such as stimulated growth factor receptors, lysosomal enzymes and lipids (By similarity).</text>
</comment>
<comment type="subunit">
    <text evidence="1">Probable peripherally associated component of the endosomal sorting required for transport complex III (ESCRT-III).</text>
</comment>
<comment type="subcellular location">
    <subcellularLocation>
        <location evidence="1">Cytoplasm</location>
    </subcellularLocation>
    <subcellularLocation>
        <location evidence="1">Endosome membrane</location>
        <topology evidence="1">Peripheral membrane protein</topology>
    </subcellularLocation>
</comment>
<comment type="disruption phenotype">
    <text evidence="4">Reduced cerebellar and forebrain volume. The phenotype of these animals resemble that seen in those after bmi1 knockdown, supporting a link between chmp1a and bmi1. In chmp1a knockdown models, the internal granule and molecular layers were more severely affected than the Purkinje cells, which are consistent with the relatively preserved folia observed in humans with CHMP1A mutations.</text>
</comment>
<comment type="similarity">
    <text evidence="5">Belongs to the SNF7 family.</text>
</comment>
<accession>Q6PHF0</accession>
<accession>Q6NWA3</accession>
<dbReference type="EMBL" id="AY398372">
    <property type="protein sequence ID" value="AAQ97805.1"/>
    <property type="molecule type" value="mRNA"/>
</dbReference>
<dbReference type="EMBL" id="BC056577">
    <property type="protein sequence ID" value="AAH56577.1"/>
    <property type="molecule type" value="mRNA"/>
</dbReference>
<dbReference type="EMBL" id="BC067665">
    <property type="protein sequence ID" value="AAH67665.1"/>
    <property type="molecule type" value="mRNA"/>
</dbReference>
<dbReference type="RefSeq" id="NP_956857.1">
    <property type="nucleotide sequence ID" value="NM_200563.3"/>
</dbReference>
<dbReference type="RefSeq" id="XP_009296498.1">
    <property type="nucleotide sequence ID" value="XM_009298223.2"/>
</dbReference>
<dbReference type="SMR" id="Q6PHF0"/>
<dbReference type="FunCoup" id="Q6PHF0">
    <property type="interactions" value="1471"/>
</dbReference>
<dbReference type="STRING" id="7955.ENSDARP00000141533"/>
<dbReference type="PaxDb" id="7955-ENSDARP00000076077"/>
<dbReference type="GeneID" id="393535"/>
<dbReference type="KEGG" id="dre:393535"/>
<dbReference type="AGR" id="ZFIN:ZDB-GENE-040426-1474"/>
<dbReference type="CTD" id="5119"/>
<dbReference type="ZFIN" id="ZDB-GENE-040426-1474">
    <property type="gene designation" value="chmp1a"/>
</dbReference>
<dbReference type="eggNOG" id="KOG3232">
    <property type="taxonomic scope" value="Eukaryota"/>
</dbReference>
<dbReference type="InParanoid" id="Q6PHF0"/>
<dbReference type="OrthoDB" id="10266568at2759"/>
<dbReference type="PhylomeDB" id="Q6PHF0"/>
<dbReference type="PRO" id="PR:Q6PHF0"/>
<dbReference type="Proteomes" id="UP000000437">
    <property type="component" value="Chromosome 25"/>
</dbReference>
<dbReference type="GO" id="GO:0000815">
    <property type="term" value="C:ESCRT III complex"/>
    <property type="evidence" value="ECO:0000318"/>
    <property type="project" value="GO_Central"/>
</dbReference>
<dbReference type="GO" id="GO:0005771">
    <property type="term" value="C:multivesicular body"/>
    <property type="evidence" value="ECO:0000318"/>
    <property type="project" value="GO_Central"/>
</dbReference>
<dbReference type="GO" id="GO:0021549">
    <property type="term" value="P:cerebellum development"/>
    <property type="evidence" value="ECO:0000315"/>
    <property type="project" value="ZFIN"/>
</dbReference>
<dbReference type="GO" id="GO:0032509">
    <property type="term" value="P:endosome transport via multivesicular body sorting pathway"/>
    <property type="evidence" value="ECO:0000318"/>
    <property type="project" value="GO_Central"/>
</dbReference>
<dbReference type="GO" id="GO:0045324">
    <property type="term" value="P:late endosome to vacuole transport"/>
    <property type="evidence" value="ECO:0000318"/>
    <property type="project" value="GO_Central"/>
</dbReference>
<dbReference type="GO" id="GO:0015031">
    <property type="term" value="P:protein transport"/>
    <property type="evidence" value="ECO:0000318"/>
    <property type="project" value="GO_Central"/>
</dbReference>
<dbReference type="Gene3D" id="6.10.140.1230">
    <property type="match status" value="1"/>
</dbReference>
<dbReference type="InterPro" id="IPR005024">
    <property type="entry name" value="Snf7_fam"/>
</dbReference>
<dbReference type="PANTHER" id="PTHR10476">
    <property type="entry name" value="CHARGED MULTIVESICULAR BODY PROTEIN"/>
    <property type="match status" value="1"/>
</dbReference>
<dbReference type="Pfam" id="PF03357">
    <property type="entry name" value="Snf7"/>
    <property type="match status" value="1"/>
</dbReference>
<proteinExistence type="evidence at transcript level"/>
<keyword id="KW-0175">Coiled coil</keyword>
<keyword id="KW-0963">Cytoplasm</keyword>
<keyword id="KW-0967">Endosome</keyword>
<keyword id="KW-0472">Membrane</keyword>
<keyword id="KW-0653">Protein transport</keyword>
<keyword id="KW-1185">Reference proteome</keyword>
<keyword id="KW-0813">Transport</keyword>
<feature type="chain" id="PRO_0000211451" description="Charged multivesicular body protein 1a">
    <location>
        <begin position="1"/>
        <end position="198"/>
    </location>
</feature>
<feature type="region of interest" description="Disordered" evidence="3">
    <location>
        <begin position="171"/>
        <end position="198"/>
    </location>
</feature>
<feature type="coiled-coil region" evidence="2">
    <location>
        <begin position="7"/>
        <end position="41"/>
    </location>
</feature>
<feature type="coiled-coil region" evidence="2">
    <location>
        <begin position="176"/>
        <end position="198"/>
    </location>
</feature>
<feature type="short sequence motif" description="MIT-interacting motif">
    <location>
        <begin position="187"/>
        <end position="197"/>
    </location>
</feature>
<feature type="sequence conflict" description="In Ref. 2; AAH67665." evidence="5" ref="2">
    <original>R</original>
    <variation>C</variation>
    <location>
        <position position="54"/>
    </location>
</feature>
<evidence type="ECO:0000250" key="1"/>
<evidence type="ECO:0000255" key="2"/>
<evidence type="ECO:0000256" key="3">
    <source>
        <dbReference type="SAM" id="MobiDB-lite"/>
    </source>
</evidence>
<evidence type="ECO:0000269" key="4">
    <source>
    </source>
</evidence>
<evidence type="ECO:0000305" key="5"/>
<gene>
    <name type="primary">chmp1a</name>
    <name type="synonym">km0004</name>
    <name type="synonym">pcoln3</name>
    <name type="ORF">zgc:65914</name>
    <name type="ORF">zgc:85863</name>
</gene>
<organism>
    <name type="scientific">Danio rerio</name>
    <name type="common">Zebrafish</name>
    <name type="synonym">Brachydanio rerio</name>
    <dbReference type="NCBI Taxonomy" id="7955"/>
    <lineage>
        <taxon>Eukaryota</taxon>
        <taxon>Metazoa</taxon>
        <taxon>Chordata</taxon>
        <taxon>Craniata</taxon>
        <taxon>Vertebrata</taxon>
        <taxon>Euteleostomi</taxon>
        <taxon>Actinopterygii</taxon>
        <taxon>Neopterygii</taxon>
        <taxon>Teleostei</taxon>
        <taxon>Ostariophysi</taxon>
        <taxon>Cypriniformes</taxon>
        <taxon>Danionidae</taxon>
        <taxon>Danioninae</taxon>
        <taxon>Danio</taxon>
    </lineage>
</organism>
<protein>
    <recommendedName>
        <fullName>Charged multivesicular body protein 1a</fullName>
    </recommendedName>
    <alternativeName>
        <fullName>Chromatin-modifying protein 1a</fullName>
        <shortName>CHMP1a</shortName>
    </alternativeName>
</protein>
<reference key="1">
    <citation type="journal article" date="2004" name="Proc. Natl. Acad. Sci. U.S.A.">
        <title>Hematopoietic gene expression profile in zebrafish kidney marrow.</title>
        <authorList>
            <person name="Song H.-D."/>
            <person name="Sun X.-J."/>
            <person name="Deng M."/>
            <person name="Zhang G.-W."/>
            <person name="Zhou Y."/>
            <person name="Wu X.-Y."/>
            <person name="Sheng Y."/>
            <person name="Chen Y."/>
            <person name="Ruan Z."/>
            <person name="Jiang C.-L."/>
            <person name="Fan H.-Y."/>
            <person name="Zon L.I."/>
            <person name="Kanki J.P."/>
            <person name="Liu T.X."/>
            <person name="Look A.T."/>
            <person name="Chen Z."/>
        </authorList>
    </citation>
    <scope>NUCLEOTIDE SEQUENCE [LARGE SCALE MRNA]</scope>
    <source>
        <tissue>Kidney marrow</tissue>
    </source>
</reference>
<reference key="2">
    <citation type="submission" date="2003-08" db="EMBL/GenBank/DDBJ databases">
        <authorList>
            <consortium name="NIH - Zebrafish Gene Collection (ZGC) project"/>
        </authorList>
    </citation>
    <scope>NUCLEOTIDE SEQUENCE [LARGE SCALE MRNA]</scope>
    <source>
        <tissue>Embryo</tissue>
    </source>
</reference>
<reference key="3">
    <citation type="journal article" date="2012" name="Nat. Genet.">
        <title>CHMP1A encodes an essential regulator of BMI1-INK4A in cerebellar development.</title>
        <authorList>
            <person name="Mochida G.H."/>
            <person name="Ganesh V.S."/>
            <person name="de Michelena M.I."/>
            <person name="Dias H."/>
            <person name="Atabay K.D."/>
            <person name="Kathrein K.L."/>
            <person name="Huang H.T."/>
            <person name="Hill R.S."/>
            <person name="Felie J.M."/>
            <person name="Rakiec D."/>
            <person name="Gleason D."/>
            <person name="Hill A.D."/>
            <person name="Malik A.N."/>
            <person name="Barry B.J."/>
            <person name="Partlow J.N."/>
            <person name="Tan W.H."/>
            <person name="Glader L.J."/>
            <person name="Barkovich A.J."/>
            <person name="Dobyns W.B."/>
            <person name="Zon L.I."/>
            <person name="Walsh C.A."/>
        </authorList>
    </citation>
    <scope>DISRUPTION PHENOTYPE</scope>
</reference>